<sequence>MKYILVTGGVISGIGKGVIASSIGTILKSSNLHVTSIKIDPYINIDAGTFSPYEHGEVFVLDDGGEVDLDLGNYERFLDIRLTKDNNLTTGKIYQSVINKERKGDYLGKTVQVVPHITDAIQEWVMRQALIPVDEDGIEPEVCVIELGGTVGDIESMPFVEAFRQFQFKVRRENFCNIHVSLVPQPSATGEQKTKPTQNSVRELRGLGLSPDLVVCRCSTPLDTSVKEKISMFCHVEPQQVICVHDVSSIYRVPLLLEEQGVVDYFRQRLDLPIGRQPRRLLMKWKEMADRYERLLESCSIALVGKYTKFSDSYASVIKALEHSALAINHRLEIKYIDSADLEQETLQEEPVRYHEAWQKLCSSEGILVPGGFGVRGTEGKIQAIAWARKQKKPFLGVCLGMQLAVVEFARDVLGWTDANSTEFNPKTSHPVVIDMPEHNPGQMGGTMRLGKRRTIFHSQNSIMKKLYGGHEYVEERHRHRYEVNPELRRELEVRGLKFVGQDTEGERMEIVELEDHPYFVGVQYHPEFLSRPIKPSPPYFGLLLASVGRLSQYIERGCRLSPRDTYSDRSENSSPDAEIAELKLPMIDHD</sequence>
<keyword id="KW-0025">Alternative splicing</keyword>
<keyword id="KW-0067">ATP-binding</keyword>
<keyword id="KW-0315">Glutamine amidotransferase</keyword>
<keyword id="KW-0436">Ligase</keyword>
<keyword id="KW-0547">Nucleotide-binding</keyword>
<keyword id="KW-0665">Pyrimidine biosynthesis</keyword>
<keyword id="KW-1185">Reference proteome</keyword>
<organism>
    <name type="scientific">Xenopus laevis</name>
    <name type="common">African clawed frog</name>
    <dbReference type="NCBI Taxonomy" id="8355"/>
    <lineage>
        <taxon>Eukaryota</taxon>
        <taxon>Metazoa</taxon>
        <taxon>Chordata</taxon>
        <taxon>Craniata</taxon>
        <taxon>Vertebrata</taxon>
        <taxon>Euteleostomi</taxon>
        <taxon>Amphibia</taxon>
        <taxon>Batrachia</taxon>
        <taxon>Anura</taxon>
        <taxon>Pipoidea</taxon>
        <taxon>Pipidae</taxon>
        <taxon>Xenopodinae</taxon>
        <taxon>Xenopus</taxon>
        <taxon>Xenopus</taxon>
    </lineage>
</organism>
<gene>
    <name type="primary">ctps1-a</name>
</gene>
<protein>
    <recommendedName>
        <fullName evidence="4">CTP synthase 1-A</fullName>
        <ecNumber evidence="2">6.3.4.2</ecNumber>
    </recommendedName>
    <alternativeName>
        <fullName>CTP synthetase 1-A</fullName>
    </alternativeName>
    <alternativeName>
        <fullName>UTP--ammonia ligase 1-A</fullName>
    </alternativeName>
</protein>
<evidence type="ECO:0000250" key="1"/>
<evidence type="ECO:0000250" key="2">
    <source>
        <dbReference type="UniProtKB" id="P17812"/>
    </source>
</evidence>
<evidence type="ECO:0000303" key="3">
    <source ref="1"/>
</evidence>
<evidence type="ECO:0000305" key="4"/>
<proteinExistence type="evidence at transcript level"/>
<accession>Q5XHA8</accession>
<accession>Q642R7</accession>
<name>PYG1A_XENLA</name>
<feature type="chain" id="PRO_0000247030" description="CTP synthase 1-A">
    <location>
        <begin position="1"/>
        <end position="591"/>
    </location>
</feature>
<feature type="domain" description="Glutamine amidotransferase type-1">
    <location>
        <begin position="300"/>
        <end position="554"/>
    </location>
</feature>
<feature type="active site" description="For GATase activity" evidence="1">
    <location>
        <position position="399"/>
    </location>
</feature>
<feature type="active site" description="For GATase activity" evidence="1">
    <location>
        <position position="526"/>
    </location>
</feature>
<feature type="active site" description="For GATase activity" evidence="1">
    <location>
        <position position="528"/>
    </location>
</feature>
<feature type="splice variant" id="VSP_019890" description="In isoform 2." evidence="3">
    <location>
        <begin position="56"/>
        <end position="112"/>
    </location>
</feature>
<feature type="splice variant" id="VSP_019891" description="In isoform 2." evidence="3">
    <location>
        <begin position="397"/>
        <end position="417"/>
    </location>
</feature>
<feature type="splice variant" id="VSP_019892" description="In isoform 2." evidence="3">
    <location>
        <begin position="565"/>
        <end position="591"/>
    </location>
</feature>
<feature type="sequence conflict" description="In Ref. 1; AAH81096." evidence="4" ref="1">
    <original>E</original>
    <variation>D</variation>
    <location>
        <position position="365"/>
    </location>
</feature>
<dbReference type="EC" id="6.3.4.2" evidence="2"/>
<dbReference type="EMBL" id="BC081096">
    <property type="protein sequence ID" value="AAH81096.1"/>
    <property type="molecule type" value="mRNA"/>
</dbReference>
<dbReference type="EMBL" id="BC084164">
    <property type="protein sequence ID" value="AAH84164.1"/>
    <property type="molecule type" value="mRNA"/>
</dbReference>
<dbReference type="RefSeq" id="NP_001088219.1">
    <molecule id="Q5XHA8-1"/>
    <property type="nucleotide sequence ID" value="NM_001094750.1"/>
</dbReference>
<dbReference type="SMR" id="Q5XHA8"/>
<dbReference type="BioGRID" id="105127">
    <property type="interactions" value="2"/>
</dbReference>
<dbReference type="DNASU" id="495047"/>
<dbReference type="GeneID" id="495047"/>
<dbReference type="KEGG" id="xla:495047"/>
<dbReference type="AGR" id="Xenbase:XB-GENE-6254536"/>
<dbReference type="CTD" id="495047"/>
<dbReference type="Xenbase" id="XB-GENE-6254536">
    <property type="gene designation" value="ctps1.S"/>
</dbReference>
<dbReference type="OrthoDB" id="1739076at2759"/>
<dbReference type="UniPathway" id="UPA00159">
    <property type="reaction ID" value="UER00277"/>
</dbReference>
<dbReference type="Proteomes" id="UP000186698">
    <property type="component" value="Chromosome 2S"/>
</dbReference>
<dbReference type="Bgee" id="495047">
    <property type="expression patterns" value="Expressed in neurula embryo and 19 other cell types or tissues"/>
</dbReference>
<dbReference type="GO" id="GO:0097268">
    <property type="term" value="C:cytoophidium"/>
    <property type="evidence" value="ECO:0000318"/>
    <property type="project" value="GO_Central"/>
</dbReference>
<dbReference type="GO" id="GO:0005737">
    <property type="term" value="C:cytoplasm"/>
    <property type="evidence" value="ECO:0000318"/>
    <property type="project" value="GO_Central"/>
</dbReference>
<dbReference type="GO" id="GO:0005524">
    <property type="term" value="F:ATP binding"/>
    <property type="evidence" value="ECO:0007669"/>
    <property type="project" value="UniProtKB-KW"/>
</dbReference>
<dbReference type="GO" id="GO:0003883">
    <property type="term" value="F:CTP synthase activity"/>
    <property type="evidence" value="ECO:0000250"/>
    <property type="project" value="UniProtKB"/>
</dbReference>
<dbReference type="GO" id="GO:0042802">
    <property type="term" value="F:identical protein binding"/>
    <property type="evidence" value="ECO:0000318"/>
    <property type="project" value="GO_Central"/>
</dbReference>
<dbReference type="GO" id="GO:0044210">
    <property type="term" value="P:'de novo' CTP biosynthetic process"/>
    <property type="evidence" value="ECO:0007669"/>
    <property type="project" value="UniProtKB-UniPathway"/>
</dbReference>
<dbReference type="GO" id="GO:0006241">
    <property type="term" value="P:CTP biosynthetic process"/>
    <property type="evidence" value="ECO:0000250"/>
    <property type="project" value="UniProtKB"/>
</dbReference>
<dbReference type="GO" id="GO:0019856">
    <property type="term" value="P:pyrimidine nucleobase biosynthetic process"/>
    <property type="evidence" value="ECO:0000318"/>
    <property type="project" value="GO_Central"/>
</dbReference>
<dbReference type="CDD" id="cd03113">
    <property type="entry name" value="CTPS_N"/>
    <property type="match status" value="1"/>
</dbReference>
<dbReference type="CDD" id="cd01746">
    <property type="entry name" value="GATase1_CTP_Synthase"/>
    <property type="match status" value="1"/>
</dbReference>
<dbReference type="FunFam" id="3.40.50.300:FF:000207">
    <property type="entry name" value="CTP synthase"/>
    <property type="match status" value="1"/>
</dbReference>
<dbReference type="FunFam" id="3.40.50.880:FF:000005">
    <property type="entry name" value="CTP synthase"/>
    <property type="match status" value="1"/>
</dbReference>
<dbReference type="Gene3D" id="3.40.50.880">
    <property type="match status" value="1"/>
</dbReference>
<dbReference type="Gene3D" id="3.40.50.300">
    <property type="entry name" value="P-loop containing nucleotide triphosphate hydrolases"/>
    <property type="match status" value="1"/>
</dbReference>
<dbReference type="HAMAP" id="MF_01227">
    <property type="entry name" value="PyrG"/>
    <property type="match status" value="1"/>
</dbReference>
<dbReference type="InterPro" id="IPR029062">
    <property type="entry name" value="Class_I_gatase-like"/>
</dbReference>
<dbReference type="InterPro" id="IPR004468">
    <property type="entry name" value="CTP_synthase"/>
</dbReference>
<dbReference type="InterPro" id="IPR017456">
    <property type="entry name" value="CTP_synthase_N"/>
</dbReference>
<dbReference type="InterPro" id="IPR017926">
    <property type="entry name" value="GATASE"/>
</dbReference>
<dbReference type="InterPro" id="IPR033828">
    <property type="entry name" value="GATase1_CTP_Synthase"/>
</dbReference>
<dbReference type="InterPro" id="IPR027417">
    <property type="entry name" value="P-loop_NTPase"/>
</dbReference>
<dbReference type="NCBIfam" id="NF003792">
    <property type="entry name" value="PRK05380.1"/>
    <property type="match status" value="1"/>
</dbReference>
<dbReference type="NCBIfam" id="TIGR00337">
    <property type="entry name" value="PyrG"/>
    <property type="match status" value="1"/>
</dbReference>
<dbReference type="PANTHER" id="PTHR11550">
    <property type="entry name" value="CTP SYNTHASE"/>
    <property type="match status" value="1"/>
</dbReference>
<dbReference type="PANTHER" id="PTHR11550:SF8">
    <property type="entry name" value="CTP SYNTHASE 1"/>
    <property type="match status" value="1"/>
</dbReference>
<dbReference type="Pfam" id="PF06418">
    <property type="entry name" value="CTP_synth_N"/>
    <property type="match status" value="1"/>
</dbReference>
<dbReference type="Pfam" id="PF00117">
    <property type="entry name" value="GATase"/>
    <property type="match status" value="1"/>
</dbReference>
<dbReference type="SUPFAM" id="SSF52317">
    <property type="entry name" value="Class I glutamine amidotransferase-like"/>
    <property type="match status" value="1"/>
</dbReference>
<dbReference type="SUPFAM" id="SSF52540">
    <property type="entry name" value="P-loop containing nucleoside triphosphate hydrolases"/>
    <property type="match status" value="1"/>
</dbReference>
<dbReference type="PROSITE" id="PS51273">
    <property type="entry name" value="GATASE_TYPE_1"/>
    <property type="match status" value="1"/>
</dbReference>
<reference key="1">
    <citation type="submission" date="2004-10" db="EMBL/GenBank/DDBJ databases">
        <authorList>
            <consortium name="NIH - Xenopus Gene Collection (XGC) project"/>
        </authorList>
    </citation>
    <scope>NUCLEOTIDE SEQUENCE [LARGE SCALE MRNA] (ISOFORMS 1 AND 2)</scope>
    <source>
        <tissue>Embryo</tissue>
        <tissue>Ovary</tissue>
    </source>
</reference>
<comment type="function">
    <text evidence="2">This enzyme is involved in the de novo synthesis of CTP, a precursor of DNA, RNA and phospholipids. Catalyzes the ATP-dependent amination of UTP to CTP with either L-glutamine or ammonia as a source of nitrogen.</text>
</comment>
<comment type="catalytic activity">
    <reaction evidence="2">
        <text>UTP + L-glutamine + ATP + H2O = CTP + L-glutamate + ADP + phosphate + 2 H(+)</text>
        <dbReference type="Rhea" id="RHEA:26426"/>
        <dbReference type="ChEBI" id="CHEBI:15377"/>
        <dbReference type="ChEBI" id="CHEBI:15378"/>
        <dbReference type="ChEBI" id="CHEBI:29985"/>
        <dbReference type="ChEBI" id="CHEBI:30616"/>
        <dbReference type="ChEBI" id="CHEBI:37563"/>
        <dbReference type="ChEBI" id="CHEBI:43474"/>
        <dbReference type="ChEBI" id="CHEBI:46398"/>
        <dbReference type="ChEBI" id="CHEBI:58359"/>
        <dbReference type="ChEBI" id="CHEBI:456216"/>
        <dbReference type="EC" id="6.3.4.2"/>
    </reaction>
</comment>
<comment type="pathway">
    <text evidence="2">Pyrimidine metabolism; CTP biosynthesis via de novo pathway; CTP from UDP: step 2/2.</text>
</comment>
<comment type="alternative products">
    <event type="alternative splicing"/>
    <isoform>
        <id>Q5XHA8-1</id>
        <name>1</name>
        <sequence type="displayed"/>
    </isoform>
    <isoform>
        <id>Q5XHA8-2</id>
        <name>2</name>
        <sequence type="described" ref="VSP_019890 VSP_019891 VSP_019892"/>
    </isoform>
</comment>
<comment type="similarity">
    <text evidence="4">Belongs to the CTP synthase family.</text>
</comment>